<organism>
    <name type="scientific">Chlamydia abortus (strain DSM 27085 / S26/3)</name>
    <name type="common">Chlamydophila abortus</name>
    <dbReference type="NCBI Taxonomy" id="218497"/>
    <lineage>
        <taxon>Bacteria</taxon>
        <taxon>Pseudomonadati</taxon>
        <taxon>Chlamydiota</taxon>
        <taxon>Chlamydiia</taxon>
        <taxon>Chlamydiales</taxon>
        <taxon>Chlamydiaceae</taxon>
        <taxon>Chlamydia/Chlamydophila group</taxon>
        <taxon>Chlamydia</taxon>
    </lineage>
</organism>
<sequence length="232" mass="24862">MTKHGKRIRGILKSYDFSKSYSLQEAIDILKQCPPVRFDQTVDVSIKLGIDPKKSDQQIRGSVSLPHGTGKTLKILVFAAGEKAKEALDAGADFVGSDDLVEKIRGGWVDCDVAVATPDMMREVGKLGKVLGPRNLMPTPKAGTVTMDVTKTIAELRKGKIEFKADRAGVCNAGVGKLSFDGHLLKENIETLCSALIKAKPPAAKGQYLVSFTVSSTMGPGISVDTRELMAS</sequence>
<feature type="chain" id="PRO_0000230600" description="Large ribosomal subunit protein uL1">
    <location>
        <begin position="1"/>
        <end position="232"/>
    </location>
</feature>
<reference key="1">
    <citation type="journal article" date="2005" name="Genome Res.">
        <title>The Chlamydophila abortus genome sequence reveals an array of variable proteins that contribute to interspecies variation.</title>
        <authorList>
            <person name="Thomson N.R."/>
            <person name="Yeats C."/>
            <person name="Bell K."/>
            <person name="Holden M.T.G."/>
            <person name="Bentley S.D."/>
            <person name="Livingstone M."/>
            <person name="Cerdeno-Tarraga A.-M."/>
            <person name="Harris B."/>
            <person name="Doggett J."/>
            <person name="Ormond D."/>
            <person name="Mungall K."/>
            <person name="Clarke K."/>
            <person name="Feltwell T."/>
            <person name="Hance Z."/>
            <person name="Sanders M."/>
            <person name="Quail M.A."/>
            <person name="Price C."/>
            <person name="Barrell B.G."/>
            <person name="Parkhill J."/>
            <person name="Longbottom D."/>
        </authorList>
    </citation>
    <scope>NUCLEOTIDE SEQUENCE [LARGE SCALE GENOMIC DNA]</scope>
    <source>
        <strain>DSM 27085 / S26/3</strain>
    </source>
</reference>
<gene>
    <name evidence="1" type="primary">rplA</name>
    <name type="ordered locus">CAB664</name>
</gene>
<proteinExistence type="inferred from homology"/>
<name>RL1_CHLAB</name>
<keyword id="KW-0678">Repressor</keyword>
<keyword id="KW-0687">Ribonucleoprotein</keyword>
<keyword id="KW-0689">Ribosomal protein</keyword>
<keyword id="KW-0694">RNA-binding</keyword>
<keyword id="KW-0699">rRNA-binding</keyword>
<keyword id="KW-0810">Translation regulation</keyword>
<keyword id="KW-0820">tRNA-binding</keyword>
<accession>Q5L5I0</accession>
<dbReference type="EMBL" id="CR848038">
    <property type="protein sequence ID" value="CAH64111.1"/>
    <property type="molecule type" value="Genomic_DNA"/>
</dbReference>
<dbReference type="RefSeq" id="WP_011097246.1">
    <property type="nucleotide sequence ID" value="NC_004552.2"/>
</dbReference>
<dbReference type="SMR" id="Q5L5I0"/>
<dbReference type="KEGG" id="cab:CAB664"/>
<dbReference type="eggNOG" id="COG0081">
    <property type="taxonomic scope" value="Bacteria"/>
</dbReference>
<dbReference type="HOGENOM" id="CLU_062853_0_0_0"/>
<dbReference type="OrthoDB" id="9803740at2"/>
<dbReference type="Proteomes" id="UP000001012">
    <property type="component" value="Chromosome"/>
</dbReference>
<dbReference type="GO" id="GO:0015934">
    <property type="term" value="C:large ribosomal subunit"/>
    <property type="evidence" value="ECO:0007669"/>
    <property type="project" value="InterPro"/>
</dbReference>
<dbReference type="GO" id="GO:0019843">
    <property type="term" value="F:rRNA binding"/>
    <property type="evidence" value="ECO:0007669"/>
    <property type="project" value="UniProtKB-UniRule"/>
</dbReference>
<dbReference type="GO" id="GO:0003735">
    <property type="term" value="F:structural constituent of ribosome"/>
    <property type="evidence" value="ECO:0007669"/>
    <property type="project" value="InterPro"/>
</dbReference>
<dbReference type="GO" id="GO:0000049">
    <property type="term" value="F:tRNA binding"/>
    <property type="evidence" value="ECO:0007669"/>
    <property type="project" value="UniProtKB-KW"/>
</dbReference>
<dbReference type="GO" id="GO:0006417">
    <property type="term" value="P:regulation of translation"/>
    <property type="evidence" value="ECO:0007669"/>
    <property type="project" value="UniProtKB-KW"/>
</dbReference>
<dbReference type="GO" id="GO:0006412">
    <property type="term" value="P:translation"/>
    <property type="evidence" value="ECO:0007669"/>
    <property type="project" value="UniProtKB-UniRule"/>
</dbReference>
<dbReference type="CDD" id="cd00403">
    <property type="entry name" value="Ribosomal_L1"/>
    <property type="match status" value="1"/>
</dbReference>
<dbReference type="FunFam" id="3.40.50.790:FF:000001">
    <property type="entry name" value="50S ribosomal protein L1"/>
    <property type="match status" value="1"/>
</dbReference>
<dbReference type="Gene3D" id="3.30.190.20">
    <property type="match status" value="1"/>
</dbReference>
<dbReference type="Gene3D" id="3.40.50.790">
    <property type="match status" value="1"/>
</dbReference>
<dbReference type="HAMAP" id="MF_01318_B">
    <property type="entry name" value="Ribosomal_uL1_B"/>
    <property type="match status" value="1"/>
</dbReference>
<dbReference type="InterPro" id="IPR005878">
    <property type="entry name" value="Ribosom_uL1_bac-type"/>
</dbReference>
<dbReference type="InterPro" id="IPR002143">
    <property type="entry name" value="Ribosomal_uL1"/>
</dbReference>
<dbReference type="InterPro" id="IPR023674">
    <property type="entry name" value="Ribosomal_uL1-like"/>
</dbReference>
<dbReference type="InterPro" id="IPR028364">
    <property type="entry name" value="Ribosomal_uL1/biogenesis"/>
</dbReference>
<dbReference type="InterPro" id="IPR016095">
    <property type="entry name" value="Ribosomal_uL1_3-a/b-sand"/>
</dbReference>
<dbReference type="InterPro" id="IPR023673">
    <property type="entry name" value="Ribosomal_uL1_CS"/>
</dbReference>
<dbReference type="NCBIfam" id="TIGR01169">
    <property type="entry name" value="rplA_bact"/>
    <property type="match status" value="1"/>
</dbReference>
<dbReference type="PANTHER" id="PTHR36427">
    <property type="entry name" value="54S RIBOSOMAL PROTEIN L1, MITOCHONDRIAL"/>
    <property type="match status" value="1"/>
</dbReference>
<dbReference type="PANTHER" id="PTHR36427:SF3">
    <property type="entry name" value="LARGE RIBOSOMAL SUBUNIT PROTEIN UL1M"/>
    <property type="match status" value="1"/>
</dbReference>
<dbReference type="Pfam" id="PF00687">
    <property type="entry name" value="Ribosomal_L1"/>
    <property type="match status" value="1"/>
</dbReference>
<dbReference type="PIRSF" id="PIRSF002155">
    <property type="entry name" value="Ribosomal_L1"/>
    <property type="match status" value="1"/>
</dbReference>
<dbReference type="SUPFAM" id="SSF56808">
    <property type="entry name" value="Ribosomal protein L1"/>
    <property type="match status" value="1"/>
</dbReference>
<dbReference type="PROSITE" id="PS01199">
    <property type="entry name" value="RIBOSOMAL_L1"/>
    <property type="match status" value="1"/>
</dbReference>
<comment type="function">
    <text evidence="1">Binds directly to 23S rRNA. The L1 stalk is quite mobile in the ribosome, and is involved in E site tRNA release.</text>
</comment>
<comment type="function">
    <text evidence="1">Protein L1 is also a translational repressor protein, it controls the translation of the L11 operon by binding to its mRNA.</text>
</comment>
<comment type="subunit">
    <text evidence="1">Part of the 50S ribosomal subunit.</text>
</comment>
<comment type="similarity">
    <text evidence="1">Belongs to the universal ribosomal protein uL1 family.</text>
</comment>
<protein>
    <recommendedName>
        <fullName evidence="1">Large ribosomal subunit protein uL1</fullName>
    </recommendedName>
    <alternativeName>
        <fullName evidence="2">50S ribosomal protein L1</fullName>
    </alternativeName>
</protein>
<evidence type="ECO:0000255" key="1">
    <source>
        <dbReference type="HAMAP-Rule" id="MF_01318"/>
    </source>
</evidence>
<evidence type="ECO:0000305" key="2"/>